<proteinExistence type="inferred from homology"/>
<dbReference type="EMBL" id="CP000458">
    <property type="protein sequence ID" value="ABK08559.1"/>
    <property type="molecule type" value="Genomic_DNA"/>
</dbReference>
<dbReference type="RefSeq" id="WP_011549692.1">
    <property type="nucleotide sequence ID" value="NC_008542.1"/>
</dbReference>
<dbReference type="SMR" id="A0K7T2"/>
<dbReference type="GeneID" id="83048605"/>
<dbReference type="KEGG" id="bch:Bcen2424_1808"/>
<dbReference type="HOGENOM" id="CLU_016077_6_2_4"/>
<dbReference type="GO" id="GO:0016887">
    <property type="term" value="F:ATP hydrolysis activity"/>
    <property type="evidence" value="ECO:0007669"/>
    <property type="project" value="InterPro"/>
</dbReference>
<dbReference type="GO" id="GO:0005525">
    <property type="term" value="F:GTP binding"/>
    <property type="evidence" value="ECO:0007669"/>
    <property type="project" value="UniProtKB-UniRule"/>
</dbReference>
<dbReference type="GO" id="GO:0043022">
    <property type="term" value="F:ribosome binding"/>
    <property type="evidence" value="ECO:0007669"/>
    <property type="project" value="TreeGrafter"/>
</dbReference>
<dbReference type="GO" id="GO:0042254">
    <property type="term" value="P:ribosome biogenesis"/>
    <property type="evidence" value="ECO:0007669"/>
    <property type="project" value="UniProtKB-KW"/>
</dbReference>
<dbReference type="CDD" id="cd01894">
    <property type="entry name" value="EngA1"/>
    <property type="match status" value="1"/>
</dbReference>
<dbReference type="CDD" id="cd01895">
    <property type="entry name" value="EngA2"/>
    <property type="match status" value="1"/>
</dbReference>
<dbReference type="FunFam" id="3.30.300.20:FF:000004">
    <property type="entry name" value="GTPase Der"/>
    <property type="match status" value="1"/>
</dbReference>
<dbReference type="FunFam" id="3.40.50.300:FF:000040">
    <property type="entry name" value="GTPase Der"/>
    <property type="match status" value="1"/>
</dbReference>
<dbReference type="FunFam" id="3.40.50.300:FF:000057">
    <property type="entry name" value="GTPase Der"/>
    <property type="match status" value="1"/>
</dbReference>
<dbReference type="Gene3D" id="3.30.300.20">
    <property type="match status" value="1"/>
</dbReference>
<dbReference type="Gene3D" id="3.40.50.300">
    <property type="entry name" value="P-loop containing nucleotide triphosphate hydrolases"/>
    <property type="match status" value="2"/>
</dbReference>
<dbReference type="HAMAP" id="MF_00195">
    <property type="entry name" value="GTPase_Der"/>
    <property type="match status" value="1"/>
</dbReference>
<dbReference type="InterPro" id="IPR003593">
    <property type="entry name" value="AAA+_ATPase"/>
</dbReference>
<dbReference type="InterPro" id="IPR031166">
    <property type="entry name" value="G_ENGA"/>
</dbReference>
<dbReference type="InterPro" id="IPR006073">
    <property type="entry name" value="GTP-bd"/>
</dbReference>
<dbReference type="InterPro" id="IPR016484">
    <property type="entry name" value="GTPase_Der"/>
</dbReference>
<dbReference type="InterPro" id="IPR032859">
    <property type="entry name" value="KH_dom-like"/>
</dbReference>
<dbReference type="InterPro" id="IPR015946">
    <property type="entry name" value="KH_dom-like_a/b"/>
</dbReference>
<dbReference type="InterPro" id="IPR027417">
    <property type="entry name" value="P-loop_NTPase"/>
</dbReference>
<dbReference type="InterPro" id="IPR005225">
    <property type="entry name" value="Small_GTP-bd"/>
</dbReference>
<dbReference type="NCBIfam" id="TIGR03594">
    <property type="entry name" value="GTPase_EngA"/>
    <property type="match status" value="1"/>
</dbReference>
<dbReference type="NCBIfam" id="TIGR00231">
    <property type="entry name" value="small_GTP"/>
    <property type="match status" value="2"/>
</dbReference>
<dbReference type="PANTHER" id="PTHR43834">
    <property type="entry name" value="GTPASE DER"/>
    <property type="match status" value="1"/>
</dbReference>
<dbReference type="PANTHER" id="PTHR43834:SF6">
    <property type="entry name" value="GTPASE DER"/>
    <property type="match status" value="1"/>
</dbReference>
<dbReference type="Pfam" id="PF14714">
    <property type="entry name" value="KH_dom-like"/>
    <property type="match status" value="1"/>
</dbReference>
<dbReference type="Pfam" id="PF01926">
    <property type="entry name" value="MMR_HSR1"/>
    <property type="match status" value="2"/>
</dbReference>
<dbReference type="PIRSF" id="PIRSF006485">
    <property type="entry name" value="GTP-binding_EngA"/>
    <property type="match status" value="1"/>
</dbReference>
<dbReference type="PRINTS" id="PR00326">
    <property type="entry name" value="GTP1OBG"/>
</dbReference>
<dbReference type="SMART" id="SM00382">
    <property type="entry name" value="AAA"/>
    <property type="match status" value="2"/>
</dbReference>
<dbReference type="SUPFAM" id="SSF52540">
    <property type="entry name" value="P-loop containing nucleoside triphosphate hydrolases"/>
    <property type="match status" value="2"/>
</dbReference>
<dbReference type="PROSITE" id="PS51712">
    <property type="entry name" value="G_ENGA"/>
    <property type="match status" value="2"/>
</dbReference>
<accession>A0K7T2</accession>
<feature type="chain" id="PRO_1000011579" description="GTPase Der">
    <location>
        <begin position="1"/>
        <end position="445"/>
    </location>
</feature>
<feature type="domain" description="EngA-type G 1">
    <location>
        <begin position="3"/>
        <end position="167"/>
    </location>
</feature>
<feature type="domain" description="EngA-type G 2">
    <location>
        <begin position="180"/>
        <end position="353"/>
    </location>
</feature>
<feature type="domain" description="KH-like" evidence="1">
    <location>
        <begin position="354"/>
        <end position="438"/>
    </location>
</feature>
<feature type="binding site" evidence="1">
    <location>
        <begin position="9"/>
        <end position="16"/>
    </location>
    <ligand>
        <name>GTP</name>
        <dbReference type="ChEBI" id="CHEBI:37565"/>
        <label>1</label>
    </ligand>
</feature>
<feature type="binding site" evidence="1">
    <location>
        <begin position="56"/>
        <end position="60"/>
    </location>
    <ligand>
        <name>GTP</name>
        <dbReference type="ChEBI" id="CHEBI:37565"/>
        <label>1</label>
    </ligand>
</feature>
<feature type="binding site" evidence="1">
    <location>
        <begin position="119"/>
        <end position="122"/>
    </location>
    <ligand>
        <name>GTP</name>
        <dbReference type="ChEBI" id="CHEBI:37565"/>
        <label>1</label>
    </ligand>
</feature>
<feature type="binding site" evidence="1">
    <location>
        <begin position="186"/>
        <end position="193"/>
    </location>
    <ligand>
        <name>GTP</name>
        <dbReference type="ChEBI" id="CHEBI:37565"/>
        <label>2</label>
    </ligand>
</feature>
<feature type="binding site" evidence="1">
    <location>
        <begin position="233"/>
        <end position="237"/>
    </location>
    <ligand>
        <name>GTP</name>
        <dbReference type="ChEBI" id="CHEBI:37565"/>
        <label>2</label>
    </ligand>
</feature>
<feature type="binding site" evidence="1">
    <location>
        <begin position="298"/>
        <end position="301"/>
    </location>
    <ligand>
        <name>GTP</name>
        <dbReference type="ChEBI" id="CHEBI:37565"/>
        <label>2</label>
    </ligand>
</feature>
<keyword id="KW-0342">GTP-binding</keyword>
<keyword id="KW-0547">Nucleotide-binding</keyword>
<keyword id="KW-0677">Repeat</keyword>
<keyword id="KW-0690">Ribosome biogenesis</keyword>
<organism>
    <name type="scientific">Burkholderia cenocepacia (strain HI2424)</name>
    <dbReference type="NCBI Taxonomy" id="331272"/>
    <lineage>
        <taxon>Bacteria</taxon>
        <taxon>Pseudomonadati</taxon>
        <taxon>Pseudomonadota</taxon>
        <taxon>Betaproteobacteria</taxon>
        <taxon>Burkholderiales</taxon>
        <taxon>Burkholderiaceae</taxon>
        <taxon>Burkholderia</taxon>
        <taxon>Burkholderia cepacia complex</taxon>
    </lineage>
</organism>
<comment type="function">
    <text evidence="1">GTPase that plays an essential role in the late steps of ribosome biogenesis.</text>
</comment>
<comment type="subunit">
    <text evidence="1">Associates with the 50S ribosomal subunit.</text>
</comment>
<comment type="similarity">
    <text evidence="1">Belongs to the TRAFAC class TrmE-Era-EngA-EngB-Septin-like GTPase superfamily. EngA (Der) GTPase family.</text>
</comment>
<reference key="1">
    <citation type="submission" date="2006-08" db="EMBL/GenBank/DDBJ databases">
        <title>Complete sequence of chromosome 1 of Burkholderia cenocepacia HI2424.</title>
        <authorList>
            <person name="Copeland A."/>
            <person name="Lucas S."/>
            <person name="Lapidus A."/>
            <person name="Barry K."/>
            <person name="Detter J.C."/>
            <person name="Glavina del Rio T."/>
            <person name="Hammon N."/>
            <person name="Israni S."/>
            <person name="Pitluck S."/>
            <person name="Chain P."/>
            <person name="Malfatti S."/>
            <person name="Shin M."/>
            <person name="Vergez L."/>
            <person name="Schmutz J."/>
            <person name="Larimer F."/>
            <person name="Land M."/>
            <person name="Hauser L."/>
            <person name="Kyrpides N."/>
            <person name="Kim E."/>
            <person name="LiPuma J.J."/>
            <person name="Gonzalez C.F."/>
            <person name="Konstantinidis K."/>
            <person name="Tiedje J.M."/>
            <person name="Richardson P."/>
        </authorList>
    </citation>
    <scope>NUCLEOTIDE SEQUENCE [LARGE SCALE GENOMIC DNA]</scope>
    <source>
        <strain>HI2424</strain>
    </source>
</reference>
<evidence type="ECO:0000255" key="1">
    <source>
        <dbReference type="HAMAP-Rule" id="MF_00195"/>
    </source>
</evidence>
<gene>
    <name evidence="1" type="primary">der</name>
    <name type="synonym">engA</name>
    <name type="ordered locus">Bcen2424_1808</name>
</gene>
<sequence>MKPVIALVGRPNVGKSTLFNRLTRSRDALVADLPGLTRDRHYGEGRVGERPYLVVDTGGFEPVAKDGILHEMARQTRQAVEEADVVVFIVDGRNGLAPQDKSIADYLRKTGRPIFLVVNKAEGMKYTAVATDFYELGLGDPRAISAAHGDGVTDMINEALEVAYAGQPEEADEDDPSRGIKIAIVGRPNVGKSTLVNALIGEDRVIAFDMPGTTRDSIYVDFERNGKKYTLIDTAGLRRRGKVFEAIEKFSVVKTLQSISDANVVILLLDAQQDISDQDAHIAGFVVEQGRALVIGVNKWDGLDDHARDRAKADLTRKLKFLDFAKSHFISAAKKTGIGALMRSVDDAYAAAMAKLPTPKLTRALIEAVEFQQPRRRGPVRPKLRYAHQGGQNPPIIVIHGNALDAVTETYKRYLENRFRETFSLTGTPLRIEFRSSNNPYADKG</sequence>
<protein>
    <recommendedName>
        <fullName evidence="1">GTPase Der</fullName>
    </recommendedName>
    <alternativeName>
        <fullName evidence="1">GTP-binding protein EngA</fullName>
    </alternativeName>
</protein>
<name>DER_BURCH</name>